<dbReference type="EC" id="2.3.2.6" evidence="1"/>
<dbReference type="EMBL" id="CP000304">
    <property type="protein sequence ID" value="ABP79954.1"/>
    <property type="molecule type" value="Genomic_DNA"/>
</dbReference>
<dbReference type="RefSeq" id="WP_011913421.1">
    <property type="nucleotide sequence ID" value="NC_009434.1"/>
</dbReference>
<dbReference type="SMR" id="A4VLV3"/>
<dbReference type="GeneID" id="66821227"/>
<dbReference type="KEGG" id="psa:PST_2295"/>
<dbReference type="eggNOG" id="COG2360">
    <property type="taxonomic scope" value="Bacteria"/>
</dbReference>
<dbReference type="HOGENOM" id="CLU_075045_0_0_6"/>
<dbReference type="Proteomes" id="UP000000233">
    <property type="component" value="Chromosome"/>
</dbReference>
<dbReference type="GO" id="GO:0005737">
    <property type="term" value="C:cytoplasm"/>
    <property type="evidence" value="ECO:0007669"/>
    <property type="project" value="UniProtKB-SubCell"/>
</dbReference>
<dbReference type="GO" id="GO:0008914">
    <property type="term" value="F:leucyl-tRNA--protein transferase activity"/>
    <property type="evidence" value="ECO:0007669"/>
    <property type="project" value="UniProtKB-UniRule"/>
</dbReference>
<dbReference type="GO" id="GO:0030163">
    <property type="term" value="P:protein catabolic process"/>
    <property type="evidence" value="ECO:0007669"/>
    <property type="project" value="UniProtKB-UniRule"/>
</dbReference>
<dbReference type="FunFam" id="3.30.70.3550:FF:000001">
    <property type="entry name" value="Leucyl/phenylalanyl-tRNA--protein transferase"/>
    <property type="match status" value="1"/>
</dbReference>
<dbReference type="FunFam" id="3.40.630.70:FF:000001">
    <property type="entry name" value="Leucyl/phenylalanyl-tRNA--protein transferase"/>
    <property type="match status" value="1"/>
</dbReference>
<dbReference type="Gene3D" id="3.40.630.70">
    <property type="entry name" value="Leucyl/phenylalanyl-tRNA-protein transferase, C-terminal domain"/>
    <property type="match status" value="1"/>
</dbReference>
<dbReference type="Gene3D" id="3.30.70.3550">
    <property type="entry name" value="Leucyl/phenylalanyl-tRNA-protein transferase, N-terminal domain"/>
    <property type="match status" value="1"/>
</dbReference>
<dbReference type="HAMAP" id="MF_00688">
    <property type="entry name" value="Leu_Phe_trans"/>
    <property type="match status" value="1"/>
</dbReference>
<dbReference type="InterPro" id="IPR016181">
    <property type="entry name" value="Acyl_CoA_acyltransferase"/>
</dbReference>
<dbReference type="InterPro" id="IPR004616">
    <property type="entry name" value="Leu/Phe-tRNA_Trfase"/>
</dbReference>
<dbReference type="InterPro" id="IPR042203">
    <property type="entry name" value="Leu/Phe-tRNA_Trfase_C"/>
</dbReference>
<dbReference type="InterPro" id="IPR042221">
    <property type="entry name" value="Leu/Phe-tRNA_Trfase_N"/>
</dbReference>
<dbReference type="NCBIfam" id="TIGR00667">
    <property type="entry name" value="aat"/>
    <property type="match status" value="1"/>
</dbReference>
<dbReference type="PANTHER" id="PTHR30098">
    <property type="entry name" value="LEUCYL/PHENYLALANYL-TRNA--PROTEIN TRANSFERASE"/>
    <property type="match status" value="1"/>
</dbReference>
<dbReference type="PANTHER" id="PTHR30098:SF2">
    <property type="entry name" value="LEUCYL_PHENYLALANYL-TRNA--PROTEIN TRANSFERASE"/>
    <property type="match status" value="1"/>
</dbReference>
<dbReference type="Pfam" id="PF03588">
    <property type="entry name" value="Leu_Phe_trans"/>
    <property type="match status" value="1"/>
</dbReference>
<dbReference type="SUPFAM" id="SSF55729">
    <property type="entry name" value="Acyl-CoA N-acyltransferases (Nat)"/>
    <property type="match status" value="1"/>
</dbReference>
<gene>
    <name evidence="1" type="primary">aat</name>
    <name type="ordered locus">PST_2295</name>
</gene>
<proteinExistence type="inferred from homology"/>
<name>LFTR_STUS1</name>
<evidence type="ECO:0000255" key="1">
    <source>
        <dbReference type="HAMAP-Rule" id="MF_00688"/>
    </source>
</evidence>
<reference key="1">
    <citation type="journal article" date="2008" name="Proc. Natl. Acad. Sci. U.S.A.">
        <title>Nitrogen fixation island and rhizosphere competence traits in the genome of root-associated Pseudomonas stutzeri A1501.</title>
        <authorList>
            <person name="Yan Y."/>
            <person name="Yang J."/>
            <person name="Dou Y."/>
            <person name="Chen M."/>
            <person name="Ping S."/>
            <person name="Peng J."/>
            <person name="Lu W."/>
            <person name="Zhang W."/>
            <person name="Yao Z."/>
            <person name="Li H."/>
            <person name="Liu W."/>
            <person name="He S."/>
            <person name="Geng L."/>
            <person name="Zhang X."/>
            <person name="Yang F."/>
            <person name="Yu H."/>
            <person name="Zhan Y."/>
            <person name="Li D."/>
            <person name="Lin Z."/>
            <person name="Wang Y."/>
            <person name="Elmerich C."/>
            <person name="Lin M."/>
            <person name="Jin Q."/>
        </authorList>
    </citation>
    <scope>NUCLEOTIDE SEQUENCE [LARGE SCALE GENOMIC DNA]</scope>
    <source>
        <strain>A1501</strain>
    </source>
</reference>
<accession>A4VLV3</accession>
<comment type="function">
    <text evidence="1">Functions in the N-end rule pathway of protein degradation where it conjugates Leu, Phe and, less efficiently, Met from aminoacyl-tRNAs to the N-termini of proteins containing an N-terminal arginine or lysine.</text>
</comment>
<comment type="catalytic activity">
    <reaction evidence="1">
        <text>N-terminal L-lysyl-[protein] + L-leucyl-tRNA(Leu) = N-terminal L-leucyl-L-lysyl-[protein] + tRNA(Leu) + H(+)</text>
        <dbReference type="Rhea" id="RHEA:12340"/>
        <dbReference type="Rhea" id="RHEA-COMP:9613"/>
        <dbReference type="Rhea" id="RHEA-COMP:9622"/>
        <dbReference type="Rhea" id="RHEA-COMP:12670"/>
        <dbReference type="Rhea" id="RHEA-COMP:12671"/>
        <dbReference type="ChEBI" id="CHEBI:15378"/>
        <dbReference type="ChEBI" id="CHEBI:65249"/>
        <dbReference type="ChEBI" id="CHEBI:78442"/>
        <dbReference type="ChEBI" id="CHEBI:78494"/>
        <dbReference type="ChEBI" id="CHEBI:133043"/>
        <dbReference type="EC" id="2.3.2.6"/>
    </reaction>
</comment>
<comment type="catalytic activity">
    <reaction evidence="1">
        <text>N-terminal L-arginyl-[protein] + L-leucyl-tRNA(Leu) = N-terminal L-leucyl-L-arginyl-[protein] + tRNA(Leu) + H(+)</text>
        <dbReference type="Rhea" id="RHEA:50416"/>
        <dbReference type="Rhea" id="RHEA-COMP:9613"/>
        <dbReference type="Rhea" id="RHEA-COMP:9622"/>
        <dbReference type="Rhea" id="RHEA-COMP:12672"/>
        <dbReference type="Rhea" id="RHEA-COMP:12673"/>
        <dbReference type="ChEBI" id="CHEBI:15378"/>
        <dbReference type="ChEBI" id="CHEBI:64719"/>
        <dbReference type="ChEBI" id="CHEBI:78442"/>
        <dbReference type="ChEBI" id="CHEBI:78494"/>
        <dbReference type="ChEBI" id="CHEBI:133044"/>
        <dbReference type="EC" id="2.3.2.6"/>
    </reaction>
</comment>
<comment type="catalytic activity">
    <reaction evidence="1">
        <text>L-phenylalanyl-tRNA(Phe) + an N-terminal L-alpha-aminoacyl-[protein] = an N-terminal L-phenylalanyl-L-alpha-aminoacyl-[protein] + tRNA(Phe)</text>
        <dbReference type="Rhea" id="RHEA:43632"/>
        <dbReference type="Rhea" id="RHEA-COMP:9668"/>
        <dbReference type="Rhea" id="RHEA-COMP:9699"/>
        <dbReference type="Rhea" id="RHEA-COMP:10636"/>
        <dbReference type="Rhea" id="RHEA-COMP:10637"/>
        <dbReference type="ChEBI" id="CHEBI:78442"/>
        <dbReference type="ChEBI" id="CHEBI:78531"/>
        <dbReference type="ChEBI" id="CHEBI:78597"/>
        <dbReference type="ChEBI" id="CHEBI:83561"/>
        <dbReference type="EC" id="2.3.2.6"/>
    </reaction>
</comment>
<comment type="subcellular location">
    <subcellularLocation>
        <location evidence="1">Cytoplasm</location>
    </subcellularLocation>
</comment>
<comment type="similarity">
    <text evidence="1">Belongs to the L/F-transferase family.</text>
</comment>
<sequence length="226" mass="25597">MLTWLKRDDLSFPPLETALREPNGLLAAGGDLRPERLLAAYRHGCFPWYQEGQPLLWWSPDPRTVLFPDELHVSRSLRKRMRHGDYRVTFDKAFAEVIQGCAGPRSYADGTWITTPMQDAYVRLHEMGVAHSVEVWQQGQLVGGLYGLAMGELFFGESMFSRATDASKVGFVTLVERLREWGFALIDCQMPTRHLESFGARSIPRAAFAEALAMHLDRPSAADWRA</sequence>
<protein>
    <recommendedName>
        <fullName evidence="1">Leucyl/phenylalanyl-tRNA--protein transferase</fullName>
        <ecNumber evidence="1">2.3.2.6</ecNumber>
    </recommendedName>
    <alternativeName>
        <fullName evidence="1">L/F-transferase</fullName>
    </alternativeName>
    <alternativeName>
        <fullName evidence="1">Leucyltransferase</fullName>
    </alternativeName>
    <alternativeName>
        <fullName evidence="1">Phenyalanyltransferase</fullName>
    </alternativeName>
</protein>
<keyword id="KW-0012">Acyltransferase</keyword>
<keyword id="KW-0963">Cytoplasm</keyword>
<keyword id="KW-1185">Reference proteome</keyword>
<keyword id="KW-0808">Transferase</keyword>
<organism>
    <name type="scientific">Stutzerimonas stutzeri (strain A1501)</name>
    <name type="common">Pseudomonas stutzeri</name>
    <dbReference type="NCBI Taxonomy" id="379731"/>
    <lineage>
        <taxon>Bacteria</taxon>
        <taxon>Pseudomonadati</taxon>
        <taxon>Pseudomonadota</taxon>
        <taxon>Gammaproteobacteria</taxon>
        <taxon>Pseudomonadales</taxon>
        <taxon>Pseudomonadaceae</taxon>
        <taxon>Stutzerimonas</taxon>
    </lineage>
</organism>
<feature type="chain" id="PRO_0000304349" description="Leucyl/phenylalanyl-tRNA--protein transferase">
    <location>
        <begin position="1"/>
        <end position="226"/>
    </location>
</feature>